<evidence type="ECO:0000250" key="1"/>
<evidence type="ECO:0000255" key="2"/>
<evidence type="ECO:0000305" key="3"/>
<organism>
    <name type="scientific">Dictyostelium discoideum</name>
    <name type="common">Social amoeba</name>
    <dbReference type="NCBI Taxonomy" id="44689"/>
    <lineage>
        <taxon>Eukaryota</taxon>
        <taxon>Amoebozoa</taxon>
        <taxon>Evosea</taxon>
        <taxon>Eumycetozoa</taxon>
        <taxon>Dictyostelia</taxon>
        <taxon>Dictyosteliales</taxon>
        <taxon>Dictyosteliaceae</taxon>
        <taxon>Dictyostelium</taxon>
    </lineage>
</organism>
<comment type="function">
    <text evidence="1">Probable adapter protein and signal transducer that links members of the tumor necrosis factor receptor family to different signaling pathways by association with the receptor cytoplasmic domain and kinases.</text>
</comment>
<comment type="subcellular location">
    <subcellularLocation>
        <location evidence="1">Cytoplasm</location>
    </subcellularLocation>
</comment>
<comment type="domain">
    <text>The MATH/TRAF domain binds to receptor cytoplasmic domains.</text>
</comment>
<comment type="similarity">
    <text evidence="3">Belongs to the TNF receptor-associated factor family.</text>
</comment>
<sequence>MVRNSEITLEQIFKEGRINLENDDYNCVICSFPLFDGLQCKRGHGACKSCWEKIIGENGKKECHSCRISIKSLDDLSKNLYLEKEIFKQKVACLNNGREKFGNTLVIKSDGGCKRQDIPIEKLLHHIKNECGYLLIDCKYSRDCKYYKQISLEQHQNECQFMSIHCPALCGKKDSRMNINKHLETPNSCKPLISINNSNNSNGNGNGIDDESIIKLSNSIVEIQKSYQNQIKKIKENSESEIAALKDSLYYSKSRIKNLEDEVEELKDRFSTLESMINKLDDSATSRSGTILINGWKMKLKSLDVGHSIVEEQFYIGTNRFYIRIYPFGDSYDNQGYVTVKLGRIDGEEYHLDIGLKVSIKGFDNKKKVLLSYYPGDIAHNIDQLVETWETSKEFKMILHFKVDLKPKIK</sequence>
<proteinExistence type="inferred from homology"/>
<feature type="chain" id="PRO_0000393771" description="TNF receptor-associated factor family protein DDB_G0279745">
    <location>
        <begin position="1"/>
        <end position="410"/>
    </location>
</feature>
<feature type="zinc finger region" description="RING-type; degenerate">
    <location>
        <begin position="27"/>
        <end position="67"/>
    </location>
</feature>
<feature type="zinc finger region" description="TRAF-type 1">
    <location>
        <begin position="81"/>
        <end position="154"/>
    </location>
</feature>
<feature type="zinc finger region" description="TRAF-type 2">
    <location>
        <begin position="154"/>
        <end position="213"/>
    </location>
</feature>
<feature type="coiled-coil region" evidence="2">
    <location>
        <begin position="216"/>
        <end position="284"/>
    </location>
</feature>
<gene>
    <name type="ORF">DDB_G0279745</name>
</gene>
<dbReference type="EMBL" id="AAFI02000032">
    <property type="protein sequence ID" value="EAL67552.1"/>
    <property type="molecule type" value="Genomic_DNA"/>
</dbReference>
<dbReference type="RefSeq" id="XP_641525.1">
    <property type="nucleotide sequence ID" value="XM_636433.1"/>
</dbReference>
<dbReference type="STRING" id="44689.Q54WD3"/>
<dbReference type="PaxDb" id="44689-DDB0206007"/>
<dbReference type="EnsemblProtists" id="EAL67552">
    <property type="protein sequence ID" value="EAL67552"/>
    <property type="gene ID" value="DDB_G0279745"/>
</dbReference>
<dbReference type="GeneID" id="8622198"/>
<dbReference type="KEGG" id="ddi:DDB_G0279745"/>
<dbReference type="dictyBase" id="DDB_G0279745"/>
<dbReference type="VEuPathDB" id="AmoebaDB:DDB_G0279745"/>
<dbReference type="HOGENOM" id="CLU_671620_0_0_1"/>
<dbReference type="InParanoid" id="Q54WD3"/>
<dbReference type="PhylomeDB" id="Q54WD3"/>
<dbReference type="PRO" id="PR:Q54WD3"/>
<dbReference type="Proteomes" id="UP000002195">
    <property type="component" value="Chromosome 3"/>
</dbReference>
<dbReference type="GO" id="GO:0005737">
    <property type="term" value="C:cytoplasm"/>
    <property type="evidence" value="ECO:0000318"/>
    <property type="project" value="GO_Central"/>
</dbReference>
<dbReference type="GO" id="GO:0008017">
    <property type="term" value="F:microtubule binding"/>
    <property type="evidence" value="ECO:0007669"/>
    <property type="project" value="InterPro"/>
</dbReference>
<dbReference type="GO" id="GO:0008270">
    <property type="term" value="F:zinc ion binding"/>
    <property type="evidence" value="ECO:0007669"/>
    <property type="project" value="UniProtKB-KW"/>
</dbReference>
<dbReference type="Gene3D" id="2.60.210.10">
    <property type="entry name" value="Apoptosis, Tumor Necrosis Factor Receptor Associated Protein 2, Chain A"/>
    <property type="match status" value="1"/>
</dbReference>
<dbReference type="Gene3D" id="3.30.40.10">
    <property type="entry name" value="Zinc/RING finger domain, C3HC4 (zinc finger)"/>
    <property type="match status" value="1"/>
</dbReference>
<dbReference type="InterPro" id="IPR024957">
    <property type="entry name" value="Cep57_MT-bd_dom"/>
</dbReference>
<dbReference type="InterPro" id="IPR008974">
    <property type="entry name" value="TRAF-like"/>
</dbReference>
<dbReference type="InterPro" id="IPR013083">
    <property type="entry name" value="Znf_RING/FYVE/PHD"/>
</dbReference>
<dbReference type="PANTHER" id="PTHR10131:SF156">
    <property type="entry name" value="RING-TYPE DOMAIN-CONTAINING PROTEIN-RELATED"/>
    <property type="match status" value="1"/>
</dbReference>
<dbReference type="PANTHER" id="PTHR10131">
    <property type="entry name" value="TNF RECEPTOR ASSOCIATED FACTOR"/>
    <property type="match status" value="1"/>
</dbReference>
<dbReference type="Pfam" id="PF06657">
    <property type="entry name" value="Cep57_MT_bd"/>
    <property type="match status" value="1"/>
</dbReference>
<dbReference type="SUPFAM" id="SSF57850">
    <property type="entry name" value="RING/U-box"/>
    <property type="match status" value="1"/>
</dbReference>
<dbReference type="SUPFAM" id="SSF49599">
    <property type="entry name" value="TRAF domain-like"/>
    <property type="match status" value="1"/>
</dbReference>
<name>Y9745_DICDI</name>
<protein>
    <recommendedName>
        <fullName>TNF receptor-associated factor family protein DDB_G0279745</fullName>
    </recommendedName>
</protein>
<accession>Q54WD3</accession>
<reference key="1">
    <citation type="journal article" date="2005" name="Nature">
        <title>The genome of the social amoeba Dictyostelium discoideum.</title>
        <authorList>
            <person name="Eichinger L."/>
            <person name="Pachebat J.A."/>
            <person name="Gloeckner G."/>
            <person name="Rajandream M.A."/>
            <person name="Sucgang R."/>
            <person name="Berriman M."/>
            <person name="Song J."/>
            <person name="Olsen R."/>
            <person name="Szafranski K."/>
            <person name="Xu Q."/>
            <person name="Tunggal B."/>
            <person name="Kummerfeld S."/>
            <person name="Madera M."/>
            <person name="Konfortov B.A."/>
            <person name="Rivero F."/>
            <person name="Bankier A.T."/>
            <person name="Lehmann R."/>
            <person name="Hamlin N."/>
            <person name="Davies R."/>
            <person name="Gaudet P."/>
            <person name="Fey P."/>
            <person name="Pilcher K."/>
            <person name="Chen G."/>
            <person name="Saunders D."/>
            <person name="Sodergren E.J."/>
            <person name="Davis P."/>
            <person name="Kerhornou A."/>
            <person name="Nie X."/>
            <person name="Hall N."/>
            <person name="Anjard C."/>
            <person name="Hemphill L."/>
            <person name="Bason N."/>
            <person name="Farbrother P."/>
            <person name="Desany B."/>
            <person name="Just E."/>
            <person name="Morio T."/>
            <person name="Rost R."/>
            <person name="Churcher C.M."/>
            <person name="Cooper J."/>
            <person name="Haydock S."/>
            <person name="van Driessche N."/>
            <person name="Cronin A."/>
            <person name="Goodhead I."/>
            <person name="Muzny D.M."/>
            <person name="Mourier T."/>
            <person name="Pain A."/>
            <person name="Lu M."/>
            <person name="Harper D."/>
            <person name="Lindsay R."/>
            <person name="Hauser H."/>
            <person name="James K.D."/>
            <person name="Quiles M."/>
            <person name="Madan Babu M."/>
            <person name="Saito T."/>
            <person name="Buchrieser C."/>
            <person name="Wardroper A."/>
            <person name="Felder M."/>
            <person name="Thangavelu M."/>
            <person name="Johnson D."/>
            <person name="Knights A."/>
            <person name="Loulseged H."/>
            <person name="Mungall K.L."/>
            <person name="Oliver K."/>
            <person name="Price C."/>
            <person name="Quail M.A."/>
            <person name="Urushihara H."/>
            <person name="Hernandez J."/>
            <person name="Rabbinowitsch E."/>
            <person name="Steffen D."/>
            <person name="Sanders M."/>
            <person name="Ma J."/>
            <person name="Kohara Y."/>
            <person name="Sharp S."/>
            <person name="Simmonds M.N."/>
            <person name="Spiegler S."/>
            <person name="Tivey A."/>
            <person name="Sugano S."/>
            <person name="White B."/>
            <person name="Walker D."/>
            <person name="Woodward J.R."/>
            <person name="Winckler T."/>
            <person name="Tanaka Y."/>
            <person name="Shaulsky G."/>
            <person name="Schleicher M."/>
            <person name="Weinstock G.M."/>
            <person name="Rosenthal A."/>
            <person name="Cox E.C."/>
            <person name="Chisholm R.L."/>
            <person name="Gibbs R.A."/>
            <person name="Loomis W.F."/>
            <person name="Platzer M."/>
            <person name="Kay R.R."/>
            <person name="Williams J.G."/>
            <person name="Dear P.H."/>
            <person name="Noegel A.A."/>
            <person name="Barrell B.G."/>
            <person name="Kuspa A."/>
        </authorList>
    </citation>
    <scope>NUCLEOTIDE SEQUENCE [LARGE SCALE GENOMIC DNA]</scope>
    <source>
        <strain>AX4</strain>
    </source>
</reference>
<keyword id="KW-0175">Coiled coil</keyword>
<keyword id="KW-0963">Cytoplasm</keyword>
<keyword id="KW-0479">Metal-binding</keyword>
<keyword id="KW-1185">Reference proteome</keyword>
<keyword id="KW-0677">Repeat</keyword>
<keyword id="KW-0862">Zinc</keyword>
<keyword id="KW-0863">Zinc-finger</keyword>